<feature type="initiator methionine" description="Removed" evidence="1">
    <location>
        <position position="1"/>
    </location>
</feature>
<feature type="chain" id="PRO_0000297745" description="Histone H3">
    <location>
        <begin position="2"/>
        <end position="136"/>
    </location>
</feature>
<feature type="region of interest" description="Disordered" evidence="2">
    <location>
        <begin position="1"/>
        <end position="42"/>
    </location>
</feature>
<feature type="compositionally biased region" description="Low complexity" evidence="2">
    <location>
        <begin position="19"/>
        <end position="31"/>
    </location>
</feature>
<feature type="modified residue" description="N6,N6,N6-trimethyllysine; alternate" evidence="1">
    <location>
        <position position="5"/>
    </location>
</feature>
<feature type="modified residue" description="N6,N6-dimethyllysine; alternate" evidence="1">
    <location>
        <position position="5"/>
    </location>
</feature>
<feature type="modified residue" description="N6-methyllysine; alternate" evidence="1">
    <location>
        <position position="5"/>
    </location>
</feature>
<feature type="modified residue" description="N6-acetyllysine; alternate" evidence="1">
    <location>
        <position position="10"/>
    </location>
</feature>
<feature type="modified residue" description="N6-methyllysine; alternate" evidence="1">
    <location>
        <position position="10"/>
    </location>
</feature>
<feature type="modified residue" description="Phosphoserine" evidence="1">
    <location>
        <position position="11"/>
    </location>
</feature>
<feature type="modified residue" description="N6,N6-dimethyllysine; alternate" evidence="1">
    <location>
        <position position="15"/>
    </location>
</feature>
<feature type="modified residue" description="N6-acetyllysine; alternate" evidence="1">
    <location>
        <position position="15"/>
    </location>
</feature>
<feature type="modified residue" description="N6-acetyllysine; alternate" evidence="1">
    <location>
        <position position="19"/>
    </location>
</feature>
<feature type="modified residue" description="N6-methyllysine; alternate" evidence="1">
    <location>
        <position position="19"/>
    </location>
</feature>
<feature type="modified residue" description="N6-acetyllysine; alternate" evidence="1">
    <location>
        <position position="24"/>
    </location>
</feature>
<feature type="modified residue" description="N6-methyllysine; alternate" evidence="1">
    <location>
        <position position="24"/>
    </location>
</feature>
<feature type="modified residue" description="N6,N6,N6-trimethyllysine; alternate" evidence="1">
    <location>
        <position position="28"/>
    </location>
</feature>
<feature type="modified residue" description="N6,N6-dimethyllysine; alternate" evidence="1">
    <location>
        <position position="28"/>
    </location>
</feature>
<feature type="modified residue" description="N6-acetyllysine; alternate" evidence="1">
    <location>
        <position position="28"/>
    </location>
</feature>
<feature type="modified residue" description="N6-methyllysine; alternate" evidence="1">
    <location>
        <position position="28"/>
    </location>
</feature>
<feature type="modified residue" description="N6,N6,N6-trimethyllysine; alternate" evidence="1">
    <location>
        <position position="37"/>
    </location>
</feature>
<feature type="modified residue" description="N6,N6-dimethyllysine; alternate" evidence="1">
    <location>
        <position position="37"/>
    </location>
</feature>
<feature type="modified residue" description="N6-acetyllysine; alternate" evidence="1">
    <location>
        <position position="37"/>
    </location>
</feature>
<feature type="modified residue" description="N6-methyllysine; alternate" evidence="1">
    <location>
        <position position="37"/>
    </location>
</feature>
<feature type="modified residue" description="N6-acetyllysine" evidence="1">
    <location>
        <position position="57"/>
    </location>
</feature>
<feature type="modified residue" description="N6-acetyllysine" evidence="1">
    <location>
        <position position="65"/>
    </location>
</feature>
<feature type="modified residue" description="N6,N6,N6-trimethyllysine; alternate" evidence="1">
    <location>
        <position position="80"/>
    </location>
</feature>
<feature type="modified residue" description="N6,N6-dimethyllysine; alternate" evidence="1">
    <location>
        <position position="80"/>
    </location>
</feature>
<feature type="modified residue" description="N6-methyllysine; alternate" evidence="1">
    <location>
        <position position="80"/>
    </location>
</feature>
<keyword id="KW-0007">Acetylation</keyword>
<keyword id="KW-0158">Chromosome</keyword>
<keyword id="KW-0238">DNA-binding</keyword>
<keyword id="KW-0488">Methylation</keyword>
<keyword id="KW-0544">Nucleosome core</keyword>
<keyword id="KW-0539">Nucleus</keyword>
<keyword id="KW-0597">Phosphoprotein</keyword>
<keyword id="KW-1185">Reference proteome</keyword>
<accession>Q1E225</accession>
<accession>J3KBI5</accession>
<comment type="function">
    <text>Core component of nucleosome. Nucleosomes wrap and compact DNA into chromatin, limiting DNA accessibility to the cellular machineries which require DNA as a template. Histones thereby play a central role in transcription regulation, DNA repair, DNA replication and chromosomal stability. DNA accessibility is regulated via a complex set of post-translational modifications of histones, also called histone code, and nucleosome remodeling.</text>
</comment>
<comment type="subunit">
    <text>The nucleosome is a histone octamer containing two molecules each of H2A, H2B, H3 and H4 assembled in one H3-H4 heterotetramer and two H2A-H2B heterodimers. The octamer wraps approximately 147 bp of DNA.</text>
</comment>
<comment type="subcellular location">
    <subcellularLocation>
        <location evidence="1">Nucleus</location>
    </subcellularLocation>
    <subcellularLocation>
        <location evidence="1">Chromosome</location>
    </subcellularLocation>
</comment>
<comment type="PTM">
    <text evidence="1">Phosphorylated to form H3S10ph. H3S10ph promotes subsequent H3K14ac formation and is required for transcriptional activation through TBP recruitment to the promoters (By similarity).</text>
</comment>
<comment type="PTM">
    <text evidence="1">Mono-, di- and trimethylated by the COMPASS complex to form H3K4me1/2/3. H3K4me activates gene expression by regulating transcription elongation and plays a role in telomere length maintenance. H3K4me enrichment correlates with transcription levels, and occurs in a 5' to 3' gradient with H3K4me3 enrichment at the 5'-end of genes, shifting to H3K4me2 and then H3K4me1. Methylated by SET2 to form H3K36me. H3K36me represses gene expression. Methylated by DOT1 to form H3K79me. H3K79me is required for association of SIR proteins with telomeric regions and for telomeric silencing. The COMPASS-mediated formation of H3K4me2/3 and the DOT1-mediated formation of H3K79me require H2BK123ub1 (By similarity).</text>
</comment>
<comment type="PTM">
    <text evidence="1">Acetylation of histone H3 leads to transcriptional activation. H3K14ac formation by GCN5 is promoted by H3S10ph. H3K14ac can also be formed by ESA1. H3K56ac formation occurs predominantly in newly synthesized H3 molecules during G1, S and G2/M of the cell cycle and may be involved in DNA repair (By similarity).</text>
</comment>
<comment type="similarity">
    <text evidence="3">Belongs to the histone H3 family.</text>
</comment>
<comment type="caution">
    <text evidence="3">To ensure consistency between histone entries, we follow the 'Brno' nomenclature for histone modifications, with positions referring to those used in the literature for the 'closest' model organism. Due to slight variations in histone sequences between organisms and to the presence of initiator methionine in UniProtKB/Swiss-Prot sequences, the actual positions of modified amino acids in the sequence generally differ. In this entry the following conventions are used: H3K4me1/2/3 = mono-, di- and trimethylated Lys-5; H3K9ac = acetylated Lys-10; H3K9me1 = monomethylated Lys-10; H3S10ph = phosphorylated Ser-11; H3K14ac = acetylated Lys-15; H3K14me2 = dimethylated Lys-15; H3K18ac = acetylated Lys-19; H3K18me1 = monomethylated Lys-19; H3K23ac = acetylated Lys-24; H3K23me1 = monomethylated Lys-24; H3K27ac = acetylated Lys-28; H3K27me1/2/3 = mono-, di- and trimethylated Lys-28; H3K36ac = acetylated Lys-37; H3K36me1/2/3 = mono-, di- and trimethylated Lys-37; H3K56ac = acetylated Lys-57; H3K64ac = acetylated Lys-65; H3K79me1/2/3 = mono-, di- and trimethylated Lys-80.</text>
</comment>
<protein>
    <recommendedName>
        <fullName>Histone H3</fullName>
    </recommendedName>
</protein>
<evidence type="ECO:0000250" key="1"/>
<evidence type="ECO:0000256" key="2">
    <source>
        <dbReference type="SAM" id="MobiDB-lite"/>
    </source>
</evidence>
<evidence type="ECO:0000305" key="3"/>
<dbReference type="EMBL" id="GG704916">
    <property type="protein sequence ID" value="EAS32364.3"/>
    <property type="molecule type" value="Genomic_DNA"/>
</dbReference>
<dbReference type="RefSeq" id="XP_001243947.1">
    <property type="nucleotide sequence ID" value="XM_001243946.2"/>
</dbReference>
<dbReference type="SMR" id="Q1E225"/>
<dbReference type="FunCoup" id="Q1E225">
    <property type="interactions" value="806"/>
</dbReference>
<dbReference type="STRING" id="246410.Q1E225"/>
<dbReference type="GeneID" id="4564274"/>
<dbReference type="KEGG" id="cim:CIMG_03388"/>
<dbReference type="VEuPathDB" id="FungiDB:CIMG_03388"/>
<dbReference type="InParanoid" id="Q1E225"/>
<dbReference type="OMA" id="HIFAEMA"/>
<dbReference type="OrthoDB" id="842664at2759"/>
<dbReference type="Proteomes" id="UP000001261">
    <property type="component" value="Unassembled WGS sequence"/>
</dbReference>
<dbReference type="GO" id="GO:0000786">
    <property type="term" value="C:nucleosome"/>
    <property type="evidence" value="ECO:0007669"/>
    <property type="project" value="UniProtKB-KW"/>
</dbReference>
<dbReference type="GO" id="GO:0005634">
    <property type="term" value="C:nucleus"/>
    <property type="evidence" value="ECO:0007669"/>
    <property type="project" value="UniProtKB-SubCell"/>
</dbReference>
<dbReference type="GO" id="GO:0003677">
    <property type="term" value="F:DNA binding"/>
    <property type="evidence" value="ECO:0007669"/>
    <property type="project" value="UniProtKB-KW"/>
</dbReference>
<dbReference type="GO" id="GO:0046982">
    <property type="term" value="F:protein heterodimerization activity"/>
    <property type="evidence" value="ECO:0007669"/>
    <property type="project" value="InterPro"/>
</dbReference>
<dbReference type="GO" id="GO:0030527">
    <property type="term" value="F:structural constituent of chromatin"/>
    <property type="evidence" value="ECO:0007669"/>
    <property type="project" value="InterPro"/>
</dbReference>
<dbReference type="CDD" id="cd22911">
    <property type="entry name" value="HFD_H3"/>
    <property type="match status" value="1"/>
</dbReference>
<dbReference type="FunFam" id="1.10.20.10:FF:000010">
    <property type="entry name" value="Histone H3"/>
    <property type="match status" value="1"/>
</dbReference>
<dbReference type="Gene3D" id="1.10.20.10">
    <property type="entry name" value="Histone, subunit A"/>
    <property type="match status" value="1"/>
</dbReference>
<dbReference type="InterPro" id="IPR009072">
    <property type="entry name" value="Histone-fold"/>
</dbReference>
<dbReference type="InterPro" id="IPR007125">
    <property type="entry name" value="Histone_H2A/H2B/H3"/>
</dbReference>
<dbReference type="InterPro" id="IPR000164">
    <property type="entry name" value="Histone_H3/CENP-A"/>
</dbReference>
<dbReference type="PANTHER" id="PTHR11426">
    <property type="entry name" value="HISTONE H3"/>
    <property type="match status" value="1"/>
</dbReference>
<dbReference type="Pfam" id="PF00125">
    <property type="entry name" value="Histone"/>
    <property type="match status" value="1"/>
</dbReference>
<dbReference type="PRINTS" id="PR00622">
    <property type="entry name" value="HISTONEH3"/>
</dbReference>
<dbReference type="SMART" id="SM00428">
    <property type="entry name" value="H3"/>
    <property type="match status" value="1"/>
</dbReference>
<dbReference type="SUPFAM" id="SSF47113">
    <property type="entry name" value="Histone-fold"/>
    <property type="match status" value="1"/>
</dbReference>
<dbReference type="PROSITE" id="PS00322">
    <property type="entry name" value="HISTONE_H3_1"/>
    <property type="match status" value="1"/>
</dbReference>
<dbReference type="PROSITE" id="PS00959">
    <property type="entry name" value="HISTONE_H3_2"/>
    <property type="match status" value="1"/>
</dbReference>
<proteinExistence type="inferred from homology"/>
<sequence>MARTKQTARKSTGGKAPRKQIAAKAARKAAPSTGGVKKPHRYKPGTVALREIRRYQKSTELLIRKLPFQRLVREIAQDFKSDLRFQSSAIGALQESVEAYLVSLFEDTNLCAIHAKRVTIQSKDIQLARRLRGERS</sequence>
<name>H3_COCIM</name>
<reference key="1">
    <citation type="journal article" date="2009" name="Genome Res.">
        <title>Comparative genomic analyses of the human fungal pathogens Coccidioides and their relatives.</title>
        <authorList>
            <person name="Sharpton T.J."/>
            <person name="Stajich J.E."/>
            <person name="Rounsley S.D."/>
            <person name="Gardner M.J."/>
            <person name="Wortman J.R."/>
            <person name="Jordar V.S."/>
            <person name="Maiti R."/>
            <person name="Kodira C.D."/>
            <person name="Neafsey D.E."/>
            <person name="Zeng Q."/>
            <person name="Hung C.-Y."/>
            <person name="McMahan C."/>
            <person name="Muszewska A."/>
            <person name="Grynberg M."/>
            <person name="Mandel M.A."/>
            <person name="Kellner E.M."/>
            <person name="Barker B.M."/>
            <person name="Galgiani J.N."/>
            <person name="Orbach M.J."/>
            <person name="Kirkland T.N."/>
            <person name="Cole G.T."/>
            <person name="Henn M.R."/>
            <person name="Birren B.W."/>
            <person name="Taylor J.W."/>
        </authorList>
    </citation>
    <scope>NUCLEOTIDE SEQUENCE [LARGE SCALE GENOMIC DNA]</scope>
    <source>
        <strain>RS</strain>
    </source>
</reference>
<reference key="2">
    <citation type="journal article" date="2010" name="Genome Res.">
        <title>Population genomic sequencing of Coccidioides fungi reveals recent hybridization and transposon control.</title>
        <authorList>
            <person name="Neafsey D.E."/>
            <person name="Barker B.M."/>
            <person name="Sharpton T.J."/>
            <person name="Stajich J.E."/>
            <person name="Park D.J."/>
            <person name="Whiston E."/>
            <person name="Hung C.-Y."/>
            <person name="McMahan C."/>
            <person name="White J."/>
            <person name="Sykes S."/>
            <person name="Heiman D."/>
            <person name="Young S."/>
            <person name="Zeng Q."/>
            <person name="Abouelleil A."/>
            <person name="Aftuck L."/>
            <person name="Bessette D."/>
            <person name="Brown A."/>
            <person name="FitzGerald M."/>
            <person name="Lui A."/>
            <person name="Macdonald J.P."/>
            <person name="Priest M."/>
            <person name="Orbach M.J."/>
            <person name="Galgiani J.N."/>
            <person name="Kirkland T.N."/>
            <person name="Cole G.T."/>
            <person name="Birren B.W."/>
            <person name="Henn M.R."/>
            <person name="Taylor J.W."/>
            <person name="Rounsley S.D."/>
        </authorList>
    </citation>
    <scope>GENOME REANNOTATION</scope>
    <source>
        <strain>RS</strain>
    </source>
</reference>
<organism>
    <name type="scientific">Coccidioides immitis (strain RS)</name>
    <name type="common">Valley fever fungus</name>
    <dbReference type="NCBI Taxonomy" id="246410"/>
    <lineage>
        <taxon>Eukaryota</taxon>
        <taxon>Fungi</taxon>
        <taxon>Dikarya</taxon>
        <taxon>Ascomycota</taxon>
        <taxon>Pezizomycotina</taxon>
        <taxon>Eurotiomycetes</taxon>
        <taxon>Eurotiomycetidae</taxon>
        <taxon>Onygenales</taxon>
        <taxon>Onygenaceae</taxon>
        <taxon>Coccidioides</taxon>
    </lineage>
</organism>
<gene>
    <name type="primary">HHT1</name>
    <name type="ORF">CIMG_03388</name>
</gene>